<sequence length="106" mass="11631">MPLTPPPDYTRVYTALAIGASIAFFTGLITRNTLPSVGDLQHNLPHGGRYRDGTKSVEYCGPRKLNSVESGSRWTFQPWLLVIVLVALIIALGRQGHNCRACGRSH</sequence>
<protein>
    <recommendedName>
        <fullName>Movement protein TGB2</fullName>
    </recommendedName>
    <alternativeName>
        <fullName>12 kDa protein</fullName>
    </alternativeName>
    <alternativeName>
        <fullName>Triple gene block 2 protein</fullName>
        <shortName>TGBp2</shortName>
    </alternativeName>
</protein>
<accession>P27332</accession>
<gene>
    <name type="ORF">ORF3</name>
</gene>
<organismHost>
    <name type="scientific">Lilium</name>
    <dbReference type="NCBI Taxonomy" id="4688"/>
</organismHost>
<keyword id="KW-1038">Host endoplasmic reticulum</keyword>
<keyword id="KW-1043">Host membrane</keyword>
<keyword id="KW-0472">Membrane</keyword>
<keyword id="KW-0812">Transmembrane</keyword>
<keyword id="KW-1133">Transmembrane helix</keyword>
<keyword id="KW-0813">Transport</keyword>
<keyword id="KW-0916">Viral movement protein</keyword>
<reference key="1">
    <citation type="journal article" date="1990" name="J. Gen. Virol.">
        <title>Homologies between the genomes of a carlavirus (lily symptomless virus) and a potexvirus (lily virus X) from lily plants.</title>
        <authorList>
            <person name="Memelink J."/>
            <person name="van der Vlugt C.I.M."/>
            <person name="Linthorst H.J.M."/>
            <person name="Derks A.F.L.M."/>
            <person name="Asjes C.J."/>
            <person name="Bol J.F."/>
        </authorList>
    </citation>
    <scope>NUCLEOTIDE SEQUENCE [GENOMIC RNA]</scope>
</reference>
<organism>
    <name type="scientific">Lily symptomless virus</name>
    <name type="common">LSV</name>
    <dbReference type="NCBI Taxonomy" id="12173"/>
    <lineage>
        <taxon>Viruses</taxon>
        <taxon>Riboviria</taxon>
        <taxon>Orthornavirae</taxon>
        <taxon>Kitrinoviricota</taxon>
        <taxon>Alsuviricetes</taxon>
        <taxon>Tymovirales</taxon>
        <taxon>Betaflexiviridae</taxon>
        <taxon>Quinvirinae</taxon>
        <taxon>Carlavirus</taxon>
    </lineage>
</organism>
<feature type="chain" id="PRO_0000222597" description="Movement protein TGB2">
    <location>
        <begin position="1"/>
        <end position="106"/>
    </location>
</feature>
<feature type="topological domain" description="Cytoplasmic" evidence="1">
    <location>
        <begin position="1"/>
        <end position="8"/>
    </location>
</feature>
<feature type="transmembrane region" description="Helical" evidence="2">
    <location>
        <begin position="9"/>
        <end position="29"/>
    </location>
</feature>
<feature type="topological domain" description="Lumenal" evidence="1">
    <location>
        <begin position="30"/>
        <end position="73"/>
    </location>
</feature>
<feature type="transmembrane region" description="Helical" evidence="2">
    <location>
        <begin position="74"/>
        <end position="94"/>
    </location>
</feature>
<feature type="topological domain" description="Cytoplasmic" evidence="1">
    <location>
        <begin position="95"/>
        <end position="106"/>
    </location>
</feature>
<evidence type="ECO:0000250" key="1"/>
<evidence type="ECO:0000255" key="2"/>
<evidence type="ECO:0000305" key="3"/>
<comment type="function">
    <text evidence="1">Plays a role in viral cell-to-cell propagation, by facilitating genome transport to neighboring plant cells through plasmosdesmata,.</text>
</comment>
<comment type="subcellular location">
    <subcellularLocation>
        <location evidence="1">Host endoplasmic reticulum membrane</location>
    </subcellularLocation>
</comment>
<comment type="miscellaneous">
    <text>TGBp1, TGBp2 and TGBp3 seem to act together for cell-to-cell propagation. TGBp1 is the main movement protein that physically cross the plasmodesma with the viral genome. TGBp2 and TGBp3 would facilitate TGBp1 function.</text>
</comment>
<comment type="similarity">
    <text evidence="3">Belongs to the Tymovirales TGBp2 protein family.</text>
</comment>
<proteinExistence type="inferred from homology"/>
<dbReference type="EMBL" id="X15343">
    <property type="protein sequence ID" value="CAA33399.1"/>
    <property type="molecule type" value="Genomic_RNA"/>
</dbReference>
<dbReference type="RefSeq" id="NP_932790.1">
    <property type="nucleotide sequence ID" value="NC_005138.1"/>
</dbReference>
<dbReference type="KEGG" id="vg:2615858"/>
<dbReference type="OrthoDB" id="20634at10239"/>
<dbReference type="GO" id="GO:0044167">
    <property type="term" value="C:host cell endoplasmic reticulum membrane"/>
    <property type="evidence" value="ECO:0007669"/>
    <property type="project" value="UniProtKB-SubCell"/>
</dbReference>
<dbReference type="GO" id="GO:0016020">
    <property type="term" value="C:membrane"/>
    <property type="evidence" value="ECO:0007669"/>
    <property type="project" value="UniProtKB-KW"/>
</dbReference>
<dbReference type="GO" id="GO:0046740">
    <property type="term" value="P:transport of virus in host, cell to cell"/>
    <property type="evidence" value="ECO:0007669"/>
    <property type="project" value="UniProtKB-KW"/>
</dbReference>
<dbReference type="InterPro" id="IPR001896">
    <property type="entry name" value="Plant_vir_prot"/>
</dbReference>
<dbReference type="Pfam" id="PF01307">
    <property type="entry name" value="Plant_vir_prot"/>
    <property type="match status" value="1"/>
</dbReference>
<name>TGB2_LSV</name>